<evidence type="ECO:0000255" key="1">
    <source>
        <dbReference type="HAMAP-Rule" id="MF_00238"/>
    </source>
</evidence>
<proteinExistence type="inferred from homology"/>
<keyword id="KW-0067">ATP-binding</keyword>
<keyword id="KW-0963">Cytoplasm</keyword>
<keyword id="KW-0418">Kinase</keyword>
<keyword id="KW-0547">Nucleotide-binding</keyword>
<keyword id="KW-0808">Transferase</keyword>
<reference key="1">
    <citation type="submission" date="2005-09" db="EMBL/GenBank/DDBJ databases">
        <authorList>
            <person name="Glass J.I."/>
            <person name="Lartigue C."/>
            <person name="Pfannkoch C."/>
            <person name="Baden-Tillson H."/>
            <person name="Smith H.O."/>
            <person name="Venter J.C."/>
            <person name="Roske K."/>
            <person name="Wise K.S."/>
            <person name="Calcutt M.J."/>
            <person name="Nelson W.C."/>
            <person name="Nierman W.C."/>
        </authorList>
    </citation>
    <scope>NUCLEOTIDE SEQUENCE [LARGE SCALE GENOMIC DNA]</scope>
    <source>
        <strain>California kid / ATCC 27343 / NCTC 10154</strain>
    </source>
</reference>
<dbReference type="EC" id="2.7.4.25" evidence="1"/>
<dbReference type="EMBL" id="CP000123">
    <property type="protein sequence ID" value="ABC01876.1"/>
    <property type="molecule type" value="Genomic_DNA"/>
</dbReference>
<dbReference type="RefSeq" id="WP_011387443.1">
    <property type="nucleotide sequence ID" value="NC_007633.1"/>
</dbReference>
<dbReference type="SMR" id="Q2SRR6"/>
<dbReference type="GeneID" id="23778466"/>
<dbReference type="KEGG" id="mcp:MCAP_0578"/>
<dbReference type="HOGENOM" id="CLU_079959_0_2_14"/>
<dbReference type="PhylomeDB" id="Q2SRR6"/>
<dbReference type="Proteomes" id="UP000001928">
    <property type="component" value="Chromosome"/>
</dbReference>
<dbReference type="GO" id="GO:0005737">
    <property type="term" value="C:cytoplasm"/>
    <property type="evidence" value="ECO:0007669"/>
    <property type="project" value="UniProtKB-SubCell"/>
</dbReference>
<dbReference type="GO" id="GO:0005524">
    <property type="term" value="F:ATP binding"/>
    <property type="evidence" value="ECO:0007669"/>
    <property type="project" value="UniProtKB-UniRule"/>
</dbReference>
<dbReference type="GO" id="GO:0036430">
    <property type="term" value="F:CMP kinase activity"/>
    <property type="evidence" value="ECO:0007669"/>
    <property type="project" value="RHEA"/>
</dbReference>
<dbReference type="GO" id="GO:0036431">
    <property type="term" value="F:dCMP kinase activity"/>
    <property type="evidence" value="ECO:0007669"/>
    <property type="project" value="RHEA"/>
</dbReference>
<dbReference type="GO" id="GO:0006220">
    <property type="term" value="P:pyrimidine nucleotide metabolic process"/>
    <property type="evidence" value="ECO:0007669"/>
    <property type="project" value="UniProtKB-UniRule"/>
</dbReference>
<dbReference type="CDD" id="cd02020">
    <property type="entry name" value="CMPK"/>
    <property type="match status" value="1"/>
</dbReference>
<dbReference type="Gene3D" id="3.40.50.300">
    <property type="entry name" value="P-loop containing nucleotide triphosphate hydrolases"/>
    <property type="match status" value="1"/>
</dbReference>
<dbReference type="HAMAP" id="MF_00238">
    <property type="entry name" value="Cytidyl_kinase_type1"/>
    <property type="match status" value="1"/>
</dbReference>
<dbReference type="InterPro" id="IPR003136">
    <property type="entry name" value="Cytidylate_kin"/>
</dbReference>
<dbReference type="InterPro" id="IPR011994">
    <property type="entry name" value="Cytidylate_kinase_dom"/>
</dbReference>
<dbReference type="InterPro" id="IPR027417">
    <property type="entry name" value="P-loop_NTPase"/>
</dbReference>
<dbReference type="NCBIfam" id="TIGR00017">
    <property type="entry name" value="cmk"/>
    <property type="match status" value="1"/>
</dbReference>
<dbReference type="Pfam" id="PF02224">
    <property type="entry name" value="Cytidylate_kin"/>
    <property type="match status" value="1"/>
</dbReference>
<dbReference type="SUPFAM" id="SSF52540">
    <property type="entry name" value="P-loop containing nucleoside triphosphate hydrolases"/>
    <property type="match status" value="1"/>
</dbReference>
<gene>
    <name evidence="1" type="primary">cmk</name>
    <name type="ordered locus">MCAP_0578</name>
</gene>
<accession>Q2SRR6</accession>
<feature type="chain" id="PRO_1000048235" description="Cytidylate kinase">
    <location>
        <begin position="1"/>
        <end position="222"/>
    </location>
</feature>
<feature type="binding site" evidence="1">
    <location>
        <begin position="10"/>
        <end position="18"/>
    </location>
    <ligand>
        <name>ATP</name>
        <dbReference type="ChEBI" id="CHEBI:30616"/>
    </ligand>
</feature>
<organism>
    <name type="scientific">Mycoplasma capricolum subsp. capricolum (strain California kid / ATCC 27343 / NCTC 10154)</name>
    <dbReference type="NCBI Taxonomy" id="340047"/>
    <lineage>
        <taxon>Bacteria</taxon>
        <taxon>Bacillati</taxon>
        <taxon>Mycoplasmatota</taxon>
        <taxon>Mollicutes</taxon>
        <taxon>Mycoplasmataceae</taxon>
        <taxon>Mycoplasma</taxon>
    </lineage>
</organism>
<protein>
    <recommendedName>
        <fullName evidence="1">Cytidylate kinase</fullName>
        <shortName evidence="1">CK</shortName>
        <ecNumber evidence="1">2.7.4.25</ecNumber>
    </recommendedName>
    <alternativeName>
        <fullName evidence="1">Cytidine monophosphate kinase</fullName>
        <shortName evidence="1">CMP kinase</shortName>
    </alternativeName>
</protein>
<sequence>MEKLIIAVDGTSSSGKSVIFKKVARILNYQFVDTGLMYRAFTWYCLSKNIDINNQNQIIKLLDSFDYKISNDQVFVNNTNVTNKLTSSEILNAINKITIIPQIRNYMVKAQQQMVKNKGYILVGRDITSVVLPNADLKIYLDCDIEIRAKRRFEQNVENKILDKSFKQIYQDLIKRDQVDKTRKIGPLVLVSDAWYIDNSYLTIDQVVDIVVNKVHQLESQK</sequence>
<comment type="catalytic activity">
    <reaction evidence="1">
        <text>CMP + ATP = CDP + ADP</text>
        <dbReference type="Rhea" id="RHEA:11600"/>
        <dbReference type="ChEBI" id="CHEBI:30616"/>
        <dbReference type="ChEBI" id="CHEBI:58069"/>
        <dbReference type="ChEBI" id="CHEBI:60377"/>
        <dbReference type="ChEBI" id="CHEBI:456216"/>
        <dbReference type="EC" id="2.7.4.25"/>
    </reaction>
</comment>
<comment type="catalytic activity">
    <reaction evidence="1">
        <text>dCMP + ATP = dCDP + ADP</text>
        <dbReference type="Rhea" id="RHEA:25094"/>
        <dbReference type="ChEBI" id="CHEBI:30616"/>
        <dbReference type="ChEBI" id="CHEBI:57566"/>
        <dbReference type="ChEBI" id="CHEBI:58593"/>
        <dbReference type="ChEBI" id="CHEBI:456216"/>
        <dbReference type="EC" id="2.7.4.25"/>
    </reaction>
</comment>
<comment type="subcellular location">
    <subcellularLocation>
        <location evidence="1">Cytoplasm</location>
    </subcellularLocation>
</comment>
<comment type="similarity">
    <text evidence="1">Belongs to the cytidylate kinase family. Type 1 subfamily.</text>
</comment>
<name>KCY_MYCCT</name>